<protein>
    <recommendedName>
        <fullName>Kinesin-like protein KIF2B</fullName>
    </recommendedName>
</protein>
<dbReference type="EMBL" id="AB071111">
    <property type="protein sequence ID" value="BAB64505.1"/>
    <property type="molecule type" value="mRNA"/>
</dbReference>
<dbReference type="EMBL" id="AB064992">
    <property type="protein sequence ID" value="BAB83534.1"/>
    <property type="molecule type" value="mRNA"/>
</dbReference>
<dbReference type="EMBL" id="AB066557">
    <property type="protein sequence ID" value="BAB84032.1"/>
    <property type="molecule type" value="mRNA"/>
</dbReference>
<dbReference type="SMR" id="Q95LT1"/>
<dbReference type="eggNOG" id="KOG0246">
    <property type="taxonomic scope" value="Eukaryota"/>
</dbReference>
<dbReference type="Proteomes" id="UP000233100">
    <property type="component" value="Unplaced"/>
</dbReference>
<dbReference type="GO" id="GO:0005813">
    <property type="term" value="C:centrosome"/>
    <property type="evidence" value="ECO:0007669"/>
    <property type="project" value="UniProtKB-SubCell"/>
</dbReference>
<dbReference type="GO" id="GO:0005737">
    <property type="term" value="C:cytoplasm"/>
    <property type="evidence" value="ECO:0007669"/>
    <property type="project" value="UniProtKB-KW"/>
</dbReference>
<dbReference type="GO" id="GO:0000776">
    <property type="term" value="C:kinetochore"/>
    <property type="evidence" value="ECO:0007669"/>
    <property type="project" value="UniProtKB-KW"/>
</dbReference>
<dbReference type="GO" id="GO:0005874">
    <property type="term" value="C:microtubule"/>
    <property type="evidence" value="ECO:0007669"/>
    <property type="project" value="UniProtKB-KW"/>
</dbReference>
<dbReference type="GO" id="GO:0005819">
    <property type="term" value="C:spindle"/>
    <property type="evidence" value="ECO:0007669"/>
    <property type="project" value="UniProtKB-SubCell"/>
</dbReference>
<dbReference type="GO" id="GO:0005524">
    <property type="term" value="F:ATP binding"/>
    <property type="evidence" value="ECO:0007669"/>
    <property type="project" value="UniProtKB-KW"/>
</dbReference>
<dbReference type="GO" id="GO:0008017">
    <property type="term" value="F:microtubule binding"/>
    <property type="evidence" value="ECO:0007669"/>
    <property type="project" value="InterPro"/>
</dbReference>
<dbReference type="GO" id="GO:0003777">
    <property type="term" value="F:microtubule motor activity"/>
    <property type="evidence" value="ECO:0007669"/>
    <property type="project" value="InterPro"/>
</dbReference>
<dbReference type="GO" id="GO:0051301">
    <property type="term" value="P:cell division"/>
    <property type="evidence" value="ECO:0007669"/>
    <property type="project" value="UniProtKB-KW"/>
</dbReference>
<dbReference type="GO" id="GO:0051310">
    <property type="term" value="P:metaphase chromosome alignment"/>
    <property type="evidence" value="ECO:0000250"/>
    <property type="project" value="UniProtKB"/>
</dbReference>
<dbReference type="GO" id="GO:0007019">
    <property type="term" value="P:microtubule depolymerization"/>
    <property type="evidence" value="ECO:0000250"/>
    <property type="project" value="UniProtKB"/>
</dbReference>
<dbReference type="GO" id="GO:0007018">
    <property type="term" value="P:microtubule-based movement"/>
    <property type="evidence" value="ECO:0007669"/>
    <property type="project" value="InterPro"/>
</dbReference>
<dbReference type="GO" id="GO:0051983">
    <property type="term" value="P:regulation of chromosome segregation"/>
    <property type="evidence" value="ECO:0000250"/>
    <property type="project" value="UniProtKB"/>
</dbReference>
<dbReference type="CDD" id="cd01367">
    <property type="entry name" value="KISc_KIF2_like"/>
    <property type="match status" value="1"/>
</dbReference>
<dbReference type="FunFam" id="3.40.850.10:FF:000012">
    <property type="entry name" value="Kinesin-like protein"/>
    <property type="match status" value="1"/>
</dbReference>
<dbReference type="Gene3D" id="3.40.850.10">
    <property type="entry name" value="Kinesin motor domain"/>
    <property type="match status" value="1"/>
</dbReference>
<dbReference type="InterPro" id="IPR054473">
    <property type="entry name" value="KIF2A-like_N"/>
</dbReference>
<dbReference type="InterPro" id="IPR027640">
    <property type="entry name" value="Kinesin-like_fam"/>
</dbReference>
<dbReference type="InterPro" id="IPR019821">
    <property type="entry name" value="Kinesin_motor_CS"/>
</dbReference>
<dbReference type="InterPro" id="IPR001752">
    <property type="entry name" value="Kinesin_motor_dom"/>
</dbReference>
<dbReference type="InterPro" id="IPR036961">
    <property type="entry name" value="Kinesin_motor_dom_sf"/>
</dbReference>
<dbReference type="InterPro" id="IPR027417">
    <property type="entry name" value="P-loop_NTPase"/>
</dbReference>
<dbReference type="PANTHER" id="PTHR47971:SF24">
    <property type="entry name" value="KINESIN-LIKE PROTEIN"/>
    <property type="match status" value="1"/>
</dbReference>
<dbReference type="PANTHER" id="PTHR47971">
    <property type="entry name" value="KINESIN-RELATED PROTEIN 6"/>
    <property type="match status" value="1"/>
</dbReference>
<dbReference type="Pfam" id="PF22923">
    <property type="entry name" value="KIF2A-like_1st"/>
    <property type="match status" value="1"/>
</dbReference>
<dbReference type="Pfam" id="PF00225">
    <property type="entry name" value="Kinesin"/>
    <property type="match status" value="1"/>
</dbReference>
<dbReference type="PRINTS" id="PR00380">
    <property type="entry name" value="KINESINHEAVY"/>
</dbReference>
<dbReference type="SMART" id="SM00129">
    <property type="entry name" value="KISc"/>
    <property type="match status" value="1"/>
</dbReference>
<dbReference type="SUPFAM" id="SSF52540">
    <property type="entry name" value="P-loop containing nucleoside triphosphate hydrolases"/>
    <property type="match status" value="1"/>
</dbReference>
<dbReference type="PROSITE" id="PS00411">
    <property type="entry name" value="KINESIN_MOTOR_1"/>
    <property type="match status" value="1"/>
</dbReference>
<dbReference type="PROSITE" id="PS50067">
    <property type="entry name" value="KINESIN_MOTOR_2"/>
    <property type="match status" value="1"/>
</dbReference>
<comment type="function">
    <text evidence="1">Plus end-directed microtubule-dependent motor required for spindle assembly and chromosome movement during mitosis. Has microtubule depolymerization activity. Plays a role in chromosome congression.</text>
</comment>
<comment type="subcellular location">
    <subcellularLocation>
        <location evidence="1">Cytoplasm</location>
        <location evidence="1">Cytoskeleton</location>
        <location evidence="1">Microtubule organizing center</location>
        <location evidence="1">Centrosome</location>
    </subcellularLocation>
    <subcellularLocation>
        <location evidence="1">Cytoplasm</location>
        <location evidence="1">Cytoskeleton</location>
        <location evidence="1">Spindle</location>
    </subcellularLocation>
    <subcellularLocation>
        <location evidence="1">Chromosome</location>
        <location evidence="1">Centromere</location>
        <location evidence="1">Kinetochore</location>
    </subcellularLocation>
    <text evidence="1">Association with kinetochore is transient.</text>
</comment>
<comment type="PTM">
    <text evidence="1">Phosphorylation at Thr-122 by PLK1 is required for activity in the correction of kinetochore-microtubules attachment errors, while phosphorylation at Ser-201 also by PLK1 is required for the kinetochore localization and activity in prometaphase.</text>
</comment>
<comment type="similarity">
    <text evidence="3">Belongs to the TRAFAC class myosin-kinesin ATPase superfamily. Kinesin family. MCAK/KIF2 subfamily.</text>
</comment>
<reference key="1">
    <citation type="journal article" date="2002" name="BMC Genomics">
        <title>Cynomolgus monkey testicular cDNAs for discovery of novel human genes in the human genome sequence.</title>
        <authorList>
            <person name="Osada N."/>
            <person name="Hida M."/>
            <person name="Kusuda J."/>
            <person name="Tanuma R."/>
            <person name="Hirata M."/>
            <person name="Suto Y."/>
            <person name="Hirai M."/>
            <person name="Terao K."/>
            <person name="Sugano S."/>
            <person name="Hashimoto K."/>
        </authorList>
    </citation>
    <scope>NUCLEOTIDE SEQUENCE [LARGE SCALE MRNA]</scope>
    <source>
        <tissue>Testis</tissue>
    </source>
</reference>
<reference key="2">
    <citation type="submission" date="2001-09" db="EMBL/GenBank/DDBJ databases">
        <title>Isolation of novel full-length cDNA clones from macaque testis cDNA libraries.</title>
        <authorList>
            <person name="Hashimoto K."/>
            <person name="Osada N."/>
            <person name="Hida M."/>
            <person name="Kusuda J."/>
            <person name="Tanuma R."/>
            <person name="Hirai M."/>
            <person name="Terao K."/>
            <person name="Sugano S."/>
        </authorList>
    </citation>
    <scope>NUCLEOTIDE SEQUENCE [LARGE SCALE MRNA]</scope>
    <source>
        <tissue>Testis</tissue>
    </source>
</reference>
<gene>
    <name type="primary">KIF2B</name>
    <name type="ORF">QtsA-10833</name>
    <name type="ORF">QtsA-13688</name>
    <name type="ORF">QtsA-18420</name>
</gene>
<organism>
    <name type="scientific">Macaca fascicularis</name>
    <name type="common">Crab-eating macaque</name>
    <name type="synonym">Cynomolgus monkey</name>
    <dbReference type="NCBI Taxonomy" id="9541"/>
    <lineage>
        <taxon>Eukaryota</taxon>
        <taxon>Metazoa</taxon>
        <taxon>Chordata</taxon>
        <taxon>Craniata</taxon>
        <taxon>Vertebrata</taxon>
        <taxon>Euteleostomi</taxon>
        <taxon>Mammalia</taxon>
        <taxon>Eutheria</taxon>
        <taxon>Euarchontoglires</taxon>
        <taxon>Primates</taxon>
        <taxon>Haplorrhini</taxon>
        <taxon>Catarrhini</taxon>
        <taxon>Cercopithecidae</taxon>
        <taxon>Cercopithecinae</taxon>
        <taxon>Macaca</taxon>
    </lineage>
</organism>
<proteinExistence type="evidence at transcript level"/>
<sequence>MAGQFCLPVSPRLSPLKPLKPHFGDIQVGIYVAIQRSDKRMHLAVVTEINRENSWVTVEWVEKAVKKGKKIDLETILLLNPSLDSAEDPMPVSPLAPAPSSAIGDQSTTTKRVVMIPQKNKTASGDSLDVRVPSKPCLMKQKKSPCLQEIEKVQKQREKRRRLQQEIRARRALDVNTRNPNYEIMHMIEEYRRHLDSSKISVLEPRQEHRICVCVRKRPLNQRETTLKDLDIITVPSDNVVMVHESKQKVDLTRYLENQTFCFDHAFDDKASNELVYQFTAQPLVESIFRKGMATCFAYGQTGSGKTYTMGGDFAGRAQDHSKGIYALVAQDVFLLLRNSIYEKLDLKVYGTFFEIYGGKVYDLLNWKKKLQVLEDGNQQIQVVGLQEQEVCCVEEVLNLVELGNSCRTSRQTSVNAHSSRSHAVFQIILKSGGKLHGKFSLVDLAGNERGADTTKASRKRQLEGAEINKSLLALKECILALGQNKPHTPFRASKLTQVLRDSFIGRNSSTCMIATISPGMTSCENTLNTLRYANRVKELNADGRPYHRGLYPNGHEASRMLKSHIGNSEMSLQRDEFIKIPCVQSEEQQKEIEDVERATLLGKDTTTSRKGSSQWLENIQERTGGVNHDVDFCIAQSLSILEQKIGVLTEIQKKLKLLRADLHVKSKVE</sequence>
<accession>Q95LT1</accession>
<accession>Q8WNT8</accession>
<evidence type="ECO:0000250" key="1">
    <source>
        <dbReference type="UniProtKB" id="Q8N4N8"/>
    </source>
</evidence>
<evidence type="ECO:0000255" key="2"/>
<evidence type="ECO:0000255" key="3">
    <source>
        <dbReference type="PROSITE-ProRule" id="PRU00283"/>
    </source>
</evidence>
<evidence type="ECO:0000305" key="4"/>
<keyword id="KW-0067">ATP-binding</keyword>
<keyword id="KW-0131">Cell cycle</keyword>
<keyword id="KW-0132">Cell division</keyword>
<keyword id="KW-0137">Centromere</keyword>
<keyword id="KW-0158">Chromosome</keyword>
<keyword id="KW-0175">Coiled coil</keyword>
<keyword id="KW-0963">Cytoplasm</keyword>
<keyword id="KW-0206">Cytoskeleton</keyword>
<keyword id="KW-0995">Kinetochore</keyword>
<keyword id="KW-0493">Microtubule</keyword>
<keyword id="KW-0498">Mitosis</keyword>
<keyword id="KW-0505">Motor protein</keyword>
<keyword id="KW-0547">Nucleotide-binding</keyword>
<keyword id="KW-0597">Phosphoprotein</keyword>
<keyword id="KW-1185">Reference proteome</keyword>
<name>KIF2B_MACFA</name>
<feature type="chain" id="PRO_0000253716" description="Kinesin-like protein KIF2B">
    <location>
        <begin position="1"/>
        <end position="670"/>
    </location>
</feature>
<feature type="domain" description="Kinesin motor" evidence="3">
    <location>
        <begin position="210"/>
        <end position="540"/>
    </location>
</feature>
<feature type="coiled-coil region" evidence="2">
    <location>
        <begin position="146"/>
        <end position="173"/>
    </location>
</feature>
<feature type="binding site" evidence="3">
    <location>
        <begin position="300"/>
        <end position="307"/>
    </location>
    <ligand>
        <name>ATP</name>
        <dbReference type="ChEBI" id="CHEBI:30616"/>
    </ligand>
</feature>
<feature type="modified residue" description="Phosphothreonine; by PLK1" evidence="1">
    <location>
        <position position="122"/>
    </location>
</feature>
<feature type="modified residue" description="Phosphoserine; by PLK1" evidence="1">
    <location>
        <position position="201"/>
    </location>
</feature>
<feature type="sequence conflict" description="In Ref. 2; BAB84032." evidence="4" ref="2">
    <original>P</original>
    <variation>S</variation>
    <location>
        <position position="180"/>
    </location>
</feature>